<keyword id="KW-0010">Activator</keyword>
<keyword id="KW-0131">Cell cycle</keyword>
<keyword id="KW-0238">DNA-binding</keyword>
<keyword id="KW-0539">Nucleus</keyword>
<keyword id="KW-1185">Reference proteome</keyword>
<keyword id="KW-0678">Repressor</keyword>
<keyword id="KW-0804">Transcription</keyword>
<keyword id="KW-0805">Transcription regulation</keyword>
<proteinExistence type="evidence at protein level"/>
<dbReference type="EMBL" id="AJ417835">
    <property type="protein sequence ID" value="CAD10632.1"/>
    <property type="molecule type" value="mRNA"/>
</dbReference>
<dbReference type="EMBL" id="AB074531">
    <property type="protein sequence ID" value="BAB91412.1"/>
    <property type="molecule type" value="mRNA"/>
</dbReference>
<dbReference type="EMBL" id="AL391146">
    <property type="protein sequence ID" value="CAC01815.1"/>
    <property type="molecule type" value="Genomic_DNA"/>
</dbReference>
<dbReference type="EMBL" id="CP002688">
    <property type="protein sequence ID" value="AED92096.1"/>
    <property type="molecule type" value="Genomic_DNA"/>
</dbReference>
<dbReference type="EMBL" id="AB493750">
    <property type="protein sequence ID" value="BAH30588.1"/>
    <property type="molecule type" value="mRNA"/>
</dbReference>
<dbReference type="PIR" id="T51441">
    <property type="entry name" value="T51441"/>
</dbReference>
<dbReference type="RefSeq" id="NP_197000.1">
    <property type="nucleotide sequence ID" value="NM_121500.4"/>
</dbReference>
<dbReference type="SMR" id="Q9LFQ9"/>
<dbReference type="BioGRID" id="16625">
    <property type="interactions" value="9"/>
</dbReference>
<dbReference type="STRING" id="3702.Q9LFQ9"/>
<dbReference type="PaxDb" id="3702-AT5G14960.1"/>
<dbReference type="ProteomicsDB" id="221958"/>
<dbReference type="DNASU" id="831348"/>
<dbReference type="EnsemblPlants" id="AT5G14960.1">
    <property type="protein sequence ID" value="AT5G14960.1"/>
    <property type="gene ID" value="AT5G14960"/>
</dbReference>
<dbReference type="GeneID" id="831348"/>
<dbReference type="Gramene" id="AT5G14960.1">
    <property type="protein sequence ID" value="AT5G14960.1"/>
    <property type="gene ID" value="AT5G14960"/>
</dbReference>
<dbReference type="KEGG" id="ath:AT5G14960"/>
<dbReference type="Araport" id="AT5G14960"/>
<dbReference type="TAIR" id="AT5G14960">
    <property type="gene designation" value="DEL2"/>
</dbReference>
<dbReference type="eggNOG" id="KOG2578">
    <property type="taxonomic scope" value="Eukaryota"/>
</dbReference>
<dbReference type="HOGENOM" id="CLU_041969_1_0_1"/>
<dbReference type="InParanoid" id="Q9LFQ9"/>
<dbReference type="OMA" id="CSDDDMI"/>
<dbReference type="PhylomeDB" id="Q9LFQ9"/>
<dbReference type="PRO" id="PR:Q9LFQ9"/>
<dbReference type="Proteomes" id="UP000006548">
    <property type="component" value="Chromosome 5"/>
</dbReference>
<dbReference type="ExpressionAtlas" id="Q9LFQ9">
    <property type="expression patterns" value="baseline and differential"/>
</dbReference>
<dbReference type="GO" id="GO:0005634">
    <property type="term" value="C:nucleus"/>
    <property type="evidence" value="ECO:0000314"/>
    <property type="project" value="TAIR"/>
</dbReference>
<dbReference type="GO" id="GO:0005667">
    <property type="term" value="C:transcription regulator complex"/>
    <property type="evidence" value="ECO:0007669"/>
    <property type="project" value="InterPro"/>
</dbReference>
<dbReference type="GO" id="GO:0003677">
    <property type="term" value="F:DNA binding"/>
    <property type="evidence" value="ECO:0000314"/>
    <property type="project" value="TAIR"/>
</dbReference>
<dbReference type="GO" id="GO:0003700">
    <property type="term" value="F:DNA-binding transcription factor activity"/>
    <property type="evidence" value="ECO:0000250"/>
    <property type="project" value="TAIR"/>
</dbReference>
<dbReference type="GO" id="GO:0000978">
    <property type="term" value="F:RNA polymerase II cis-regulatory region sequence-specific DNA binding"/>
    <property type="evidence" value="ECO:0007669"/>
    <property type="project" value="InterPro"/>
</dbReference>
<dbReference type="GO" id="GO:0008284">
    <property type="term" value="P:positive regulation of cell population proliferation"/>
    <property type="evidence" value="ECO:0000315"/>
    <property type="project" value="UniProtKB"/>
</dbReference>
<dbReference type="GO" id="GO:0006357">
    <property type="term" value="P:regulation of transcription by RNA polymerase II"/>
    <property type="evidence" value="ECO:0007669"/>
    <property type="project" value="InterPro"/>
</dbReference>
<dbReference type="GO" id="GO:0009733">
    <property type="term" value="P:response to auxin"/>
    <property type="evidence" value="ECO:0000270"/>
    <property type="project" value="UniProtKB"/>
</dbReference>
<dbReference type="FunFam" id="1.10.10.10:FF:000073">
    <property type="entry name" value="E2F transcription factor 8"/>
    <property type="match status" value="1"/>
</dbReference>
<dbReference type="FunFam" id="1.10.10.10:FF:000295">
    <property type="entry name" value="E2F transcription factor-like E2FE"/>
    <property type="match status" value="1"/>
</dbReference>
<dbReference type="Gene3D" id="1.10.10.10">
    <property type="entry name" value="Winged helix-like DNA-binding domain superfamily/Winged helix DNA-binding domain"/>
    <property type="match status" value="2"/>
</dbReference>
<dbReference type="InterPro" id="IPR015633">
    <property type="entry name" value="E2F"/>
</dbReference>
<dbReference type="InterPro" id="IPR003316">
    <property type="entry name" value="E2F_WHTH_DNA-bd_dom"/>
</dbReference>
<dbReference type="InterPro" id="IPR036388">
    <property type="entry name" value="WH-like_DNA-bd_sf"/>
</dbReference>
<dbReference type="InterPro" id="IPR036390">
    <property type="entry name" value="WH_DNA-bd_sf"/>
</dbReference>
<dbReference type="PANTHER" id="PTHR12081:SF104">
    <property type="entry name" value="E2F TRANSCRIPTION FACTOR-LIKE E2FD"/>
    <property type="match status" value="1"/>
</dbReference>
<dbReference type="PANTHER" id="PTHR12081">
    <property type="entry name" value="TRANSCRIPTION FACTOR E2F"/>
    <property type="match status" value="1"/>
</dbReference>
<dbReference type="Pfam" id="PF02319">
    <property type="entry name" value="E2F_TDP"/>
    <property type="match status" value="2"/>
</dbReference>
<dbReference type="SMART" id="SM01372">
    <property type="entry name" value="E2F_TDP"/>
    <property type="match status" value="2"/>
</dbReference>
<dbReference type="SUPFAM" id="SSF46785">
    <property type="entry name" value="Winged helix' DNA-binding domain"/>
    <property type="match status" value="2"/>
</dbReference>
<comment type="function">
    <text evidence="2 3 4">Inhibitor of E2F-dependent regulation of gene expression. Binds specifically the E2 recognition site as a monomer without interacting with DP proteins. May be up-regulating E2FA and down-regulating repressors of cell cycle progression. Promotes cell proliferation and represses cell elongation. Regulated by proteolysis via a ubiquitin-proteasome pathway.</text>
</comment>
<comment type="subunit">
    <text evidence="3">Monomer. No interactions with DPA or E2FA.</text>
</comment>
<comment type="subcellular location">
    <subcellularLocation>
        <location evidence="3">Nucleus</location>
    </subcellularLocation>
</comment>
<comment type="tissue specificity">
    <text evidence="3 4">Preferentially expressed in proliferating tissues. Highly expressed in young stalk and young flowers. Lower expression in young leaves and mature flowers. Detected in cotyledonary vascular tissues, the shoot apical meristem, the base of trichomes, the fully developed stomata, the central root cylinder and in the columella of lateral roots but not in the primary root tips or in the leaf epidermal cells.</text>
</comment>
<comment type="developmental stage">
    <text evidence="2">Expressed in a cell cycle-dependent manner. Not detected at the G1/S transition, but increases during the progression into S phase and peaks after the passage into G2.</text>
</comment>
<comment type="induction">
    <text evidence="4">Down-regulated posttranscroptionally by auxin.</text>
</comment>
<comment type="domain">
    <text>The two DNA binding domains are required for binding to the E2 site.</text>
</comment>
<comment type="disruption phenotype">
    <text evidence="4">Increased root length and smaller cotyledons. Reduced root meristematic zone but longer cells in the differentiation zone.</text>
</comment>
<comment type="similarity">
    <text evidence="5">Belongs to the E2F/DP family.</text>
</comment>
<reference key="1">
    <citation type="journal article" date="2002" name="J. Biol. Chem.">
        <title>The E2F family of transcription factors from Arabidopsis thaliana. Novel and conserved components of the retinoblastoma/E2F pathway in plants.</title>
        <authorList>
            <person name="Mariconti L."/>
            <person name="Pellegrini B."/>
            <person name="Cantoni R."/>
            <person name="Stevens R."/>
            <person name="Bergounioux C."/>
            <person name="Cella R."/>
            <person name="Albani D."/>
        </authorList>
    </citation>
    <scope>NUCLEOTIDE SEQUENCE [MRNA]</scope>
    <scope>FUNCTION</scope>
    <scope>DEVELOPMENTAL STAGE</scope>
    <scope>GENE FAMILY</scope>
    <scope>NOMENCLATURE</scope>
</reference>
<reference key="2">
    <citation type="journal article" date="2002" name="J. Biol. Chem.">
        <title>E2Ls, E2F-like repressors of Arabidopsis that bind to E2F sites in a monomeric form.</title>
        <authorList>
            <person name="Kosugi S."/>
            <person name="Ohashi Y."/>
        </authorList>
    </citation>
    <scope>NUCLEOTIDE SEQUENCE [MRNA]</scope>
    <scope>FUNCTION</scope>
    <scope>SUBUNIT</scope>
    <scope>SUBCELLULAR LOCATION</scope>
    <scope>TISSUE SPECIFICITY</scope>
</reference>
<reference key="3">
    <citation type="journal article" date="2000" name="Nature">
        <title>Sequence and analysis of chromosome 5 of the plant Arabidopsis thaliana.</title>
        <authorList>
            <person name="Tabata S."/>
            <person name="Kaneko T."/>
            <person name="Nakamura Y."/>
            <person name="Kotani H."/>
            <person name="Kato T."/>
            <person name="Asamizu E."/>
            <person name="Miyajima N."/>
            <person name="Sasamoto S."/>
            <person name="Kimura T."/>
            <person name="Hosouchi T."/>
            <person name="Kawashima K."/>
            <person name="Kohara M."/>
            <person name="Matsumoto M."/>
            <person name="Matsuno A."/>
            <person name="Muraki A."/>
            <person name="Nakayama S."/>
            <person name="Nakazaki N."/>
            <person name="Naruo K."/>
            <person name="Okumura S."/>
            <person name="Shinpo S."/>
            <person name="Takeuchi C."/>
            <person name="Wada T."/>
            <person name="Watanabe A."/>
            <person name="Yamada M."/>
            <person name="Yasuda M."/>
            <person name="Sato S."/>
            <person name="de la Bastide M."/>
            <person name="Huang E."/>
            <person name="Spiegel L."/>
            <person name="Gnoj L."/>
            <person name="O'Shaughnessy A."/>
            <person name="Preston R."/>
            <person name="Habermann K."/>
            <person name="Murray J."/>
            <person name="Johnson D."/>
            <person name="Rohlfing T."/>
            <person name="Nelson J."/>
            <person name="Stoneking T."/>
            <person name="Pepin K."/>
            <person name="Spieth J."/>
            <person name="Sekhon M."/>
            <person name="Armstrong J."/>
            <person name="Becker M."/>
            <person name="Belter E."/>
            <person name="Cordum H."/>
            <person name="Cordes M."/>
            <person name="Courtney L."/>
            <person name="Courtney W."/>
            <person name="Dante M."/>
            <person name="Du H."/>
            <person name="Edwards J."/>
            <person name="Fryman J."/>
            <person name="Haakensen B."/>
            <person name="Lamar E."/>
            <person name="Latreille P."/>
            <person name="Leonard S."/>
            <person name="Meyer R."/>
            <person name="Mulvaney E."/>
            <person name="Ozersky P."/>
            <person name="Riley A."/>
            <person name="Strowmatt C."/>
            <person name="Wagner-McPherson C."/>
            <person name="Wollam A."/>
            <person name="Yoakum M."/>
            <person name="Bell M."/>
            <person name="Dedhia N."/>
            <person name="Parnell L."/>
            <person name="Shah R."/>
            <person name="Rodriguez M."/>
            <person name="Hoon See L."/>
            <person name="Vil D."/>
            <person name="Baker J."/>
            <person name="Kirchoff K."/>
            <person name="Toth K."/>
            <person name="King L."/>
            <person name="Bahret A."/>
            <person name="Miller B."/>
            <person name="Marra M.A."/>
            <person name="Martienssen R."/>
            <person name="McCombie W.R."/>
            <person name="Wilson R.K."/>
            <person name="Murphy G."/>
            <person name="Bancroft I."/>
            <person name="Volckaert G."/>
            <person name="Wambutt R."/>
            <person name="Duesterhoeft A."/>
            <person name="Stiekema W."/>
            <person name="Pohl T."/>
            <person name="Entian K.-D."/>
            <person name="Terryn N."/>
            <person name="Hartley N."/>
            <person name="Bent E."/>
            <person name="Johnson S."/>
            <person name="Langham S.-A."/>
            <person name="McCullagh B."/>
            <person name="Robben J."/>
            <person name="Grymonprez B."/>
            <person name="Zimmermann W."/>
            <person name="Ramsperger U."/>
            <person name="Wedler H."/>
            <person name="Balke K."/>
            <person name="Wedler E."/>
            <person name="Peters S."/>
            <person name="van Staveren M."/>
            <person name="Dirkse W."/>
            <person name="Mooijman P."/>
            <person name="Klein Lankhorst R."/>
            <person name="Weitzenegger T."/>
            <person name="Bothe G."/>
            <person name="Rose M."/>
            <person name="Hauf J."/>
            <person name="Berneiser S."/>
            <person name="Hempel S."/>
            <person name="Feldpausch M."/>
            <person name="Lamberth S."/>
            <person name="Villarroel R."/>
            <person name="Gielen J."/>
            <person name="Ardiles W."/>
            <person name="Bents O."/>
            <person name="Lemcke K."/>
            <person name="Kolesov G."/>
            <person name="Mayer K.F.X."/>
            <person name="Rudd S."/>
            <person name="Schoof H."/>
            <person name="Schueller C."/>
            <person name="Zaccaria P."/>
            <person name="Mewes H.-W."/>
            <person name="Bevan M."/>
            <person name="Fransz P.F."/>
        </authorList>
    </citation>
    <scope>NUCLEOTIDE SEQUENCE [LARGE SCALE GENOMIC DNA]</scope>
    <source>
        <strain>cv. Columbia</strain>
    </source>
</reference>
<reference key="4">
    <citation type="journal article" date="2017" name="Plant J.">
        <title>Araport11: a complete reannotation of the Arabidopsis thaliana reference genome.</title>
        <authorList>
            <person name="Cheng C.Y."/>
            <person name="Krishnakumar V."/>
            <person name="Chan A.P."/>
            <person name="Thibaud-Nissen F."/>
            <person name="Schobel S."/>
            <person name="Town C.D."/>
        </authorList>
    </citation>
    <scope>GENOME REANNOTATION</scope>
    <source>
        <strain>cv. Columbia</strain>
    </source>
</reference>
<reference key="5">
    <citation type="submission" date="2009-03" db="EMBL/GenBank/DDBJ databases">
        <title>ORF cloning and analysis of Arabidopsis transcription factor genes.</title>
        <authorList>
            <person name="Fujita M."/>
            <person name="Mizukado S."/>
            <person name="Seki M."/>
            <person name="Shinozaki K."/>
            <person name="Mitsuda N."/>
            <person name="Takiguchi Y."/>
            <person name="Takagi M."/>
        </authorList>
    </citation>
    <scope>NUCLEOTIDE SEQUENCE [LARGE SCALE MRNA]</scope>
</reference>
<reference key="6">
    <citation type="journal article" date="2002" name="Plant Cell">
        <title>Genome-wide analysis of core cell cycle genes in Arabidopsis.</title>
        <authorList>
            <person name="Vandepoele K."/>
            <person name="Raes J."/>
            <person name="de Veylder L."/>
            <person name="Rouze P."/>
            <person name="Rombauts S."/>
            <person name="Inze D."/>
        </authorList>
    </citation>
    <scope>GENE FAMILY</scope>
    <scope>NOMENCLATURE</scope>
</reference>
<reference key="7">
    <citation type="journal article" date="2010" name="Plant Mol. Biol.">
        <title>The E2FD/DEL2 factor is a component of a regulatory network controlling cell proliferation and development in Arabidopsis.</title>
        <authorList>
            <person name="Sozzani R."/>
            <person name="Maggio C."/>
            <person name="Giordo R."/>
            <person name="Umana E."/>
            <person name="Ascencio-Ibanez J.T."/>
            <person name="Hanley-Bowdoin L."/>
            <person name="Bergounioux C."/>
            <person name="Cella R."/>
            <person name="Albani D."/>
        </authorList>
    </citation>
    <scope>FUNCTION</scope>
    <scope>INDUCTION BY AUXIN</scope>
    <scope>TISSUE SPECIFICITY</scope>
    <scope>DISRUPTION PHENOTYPE</scope>
</reference>
<accession>Q9LFQ9</accession>
<name>E2FD_ARATH</name>
<protein>
    <recommendedName>
        <fullName>E2F transcription factor-like E2FD</fullName>
    </recommendedName>
    <alternativeName>
        <fullName>DP-E2F-like protein 2</fullName>
    </alternativeName>
    <alternativeName>
        <fullName>E2F-like repressor E2L1</fullName>
    </alternativeName>
</protein>
<gene>
    <name type="primary">E2FD</name>
    <name type="synonym">DEL2</name>
    <name type="synonym">E2L1</name>
    <name type="synonym">ELP3</name>
    <name type="ordered locus">At5g14960</name>
    <name type="ORF">F2G14.80</name>
</gene>
<sequence length="359" mass="40553">MDSLALAPQVYSRKDKSLGVLVANFLTLYNRPDVDLFGLDDAAAKLGVERRRIYDVVNILESIGLVARSGKNQYSWKGFGAVPRALSELKEEGMKEKFAIVPFVAKSEMVVYEKEGEESFMLSPDDQEFSPSPRPDNRKERTLWLLAQNFVKLFLCSDDDLVTFDSATKALLNESQDMNMRKKVRRLYDIANVFSSMKLIEKTHVPETKKPAYRWLGSKTIFENRFIDGSASLCDRNVPKKRAFGTELTNVNAKRNKSGCSKEDSKRNGNQNTSIVIKQEQCDDVKPDVKNFASGSSTPAGTSESNDMGNNIRPRGRLGVIEALSTLYQPSYCNPELLGLFAHYNETFRSYQEEFGREK</sequence>
<evidence type="ECO:0000256" key="1">
    <source>
        <dbReference type="SAM" id="MobiDB-lite"/>
    </source>
</evidence>
<evidence type="ECO:0000269" key="2">
    <source>
    </source>
</evidence>
<evidence type="ECO:0000269" key="3">
    <source>
    </source>
</evidence>
<evidence type="ECO:0000269" key="4">
    <source>
    </source>
</evidence>
<evidence type="ECO:0000305" key="5"/>
<feature type="chain" id="PRO_0000406292" description="E2F transcription factor-like E2FD">
    <location>
        <begin position="1"/>
        <end position="359"/>
    </location>
</feature>
<feature type="DNA-binding region">
    <location>
        <begin position="13"/>
        <end position="78"/>
    </location>
</feature>
<feature type="DNA-binding region">
    <location>
        <begin position="138"/>
        <end position="217"/>
    </location>
</feature>
<feature type="region of interest" description="Disordered" evidence="1">
    <location>
        <begin position="255"/>
        <end position="274"/>
    </location>
</feature>
<feature type="region of interest" description="Disordered" evidence="1">
    <location>
        <begin position="288"/>
        <end position="313"/>
    </location>
</feature>
<feature type="compositionally biased region" description="Polar residues" evidence="1">
    <location>
        <begin position="293"/>
        <end position="309"/>
    </location>
</feature>
<organism>
    <name type="scientific">Arabidopsis thaliana</name>
    <name type="common">Mouse-ear cress</name>
    <dbReference type="NCBI Taxonomy" id="3702"/>
    <lineage>
        <taxon>Eukaryota</taxon>
        <taxon>Viridiplantae</taxon>
        <taxon>Streptophyta</taxon>
        <taxon>Embryophyta</taxon>
        <taxon>Tracheophyta</taxon>
        <taxon>Spermatophyta</taxon>
        <taxon>Magnoliopsida</taxon>
        <taxon>eudicotyledons</taxon>
        <taxon>Gunneridae</taxon>
        <taxon>Pentapetalae</taxon>
        <taxon>rosids</taxon>
        <taxon>malvids</taxon>
        <taxon>Brassicales</taxon>
        <taxon>Brassicaceae</taxon>
        <taxon>Camelineae</taxon>
        <taxon>Arabidopsis</taxon>
    </lineage>
</organism>